<evidence type="ECO:0000255" key="1">
    <source>
        <dbReference type="HAMAP-Rule" id="MF_00236"/>
    </source>
</evidence>
<evidence type="ECO:0000256" key="2">
    <source>
        <dbReference type="SAM" id="MobiDB-lite"/>
    </source>
</evidence>
<accession>Q7MZ84</accession>
<dbReference type="EMBL" id="BX571873">
    <property type="protein sequence ID" value="CAE16782.1"/>
    <property type="molecule type" value="Genomic_DNA"/>
</dbReference>
<dbReference type="RefSeq" id="WP_011148500.1">
    <property type="nucleotide sequence ID" value="NC_005126.1"/>
</dbReference>
<dbReference type="SMR" id="Q7MZ84"/>
<dbReference type="STRING" id="243265.plu4410"/>
<dbReference type="GeneID" id="88806867"/>
<dbReference type="KEGG" id="plu:plu4410"/>
<dbReference type="eggNOG" id="COG1826">
    <property type="taxonomic scope" value="Bacteria"/>
</dbReference>
<dbReference type="HOGENOM" id="CLU_086034_5_1_6"/>
<dbReference type="OrthoDB" id="7066617at2"/>
<dbReference type="Proteomes" id="UP000002514">
    <property type="component" value="Chromosome"/>
</dbReference>
<dbReference type="GO" id="GO:0033281">
    <property type="term" value="C:TAT protein transport complex"/>
    <property type="evidence" value="ECO:0007669"/>
    <property type="project" value="UniProtKB-UniRule"/>
</dbReference>
<dbReference type="GO" id="GO:0008320">
    <property type="term" value="F:protein transmembrane transporter activity"/>
    <property type="evidence" value="ECO:0007669"/>
    <property type="project" value="UniProtKB-UniRule"/>
</dbReference>
<dbReference type="GO" id="GO:0043953">
    <property type="term" value="P:protein transport by the Tat complex"/>
    <property type="evidence" value="ECO:0007669"/>
    <property type="project" value="UniProtKB-UniRule"/>
</dbReference>
<dbReference type="FunFam" id="1.20.5.3310:FF:000001">
    <property type="entry name" value="Probable Sec-independent protein translocase protein TatE"/>
    <property type="match status" value="1"/>
</dbReference>
<dbReference type="Gene3D" id="1.20.5.3310">
    <property type="match status" value="1"/>
</dbReference>
<dbReference type="HAMAP" id="MF_00236">
    <property type="entry name" value="TatA_E"/>
    <property type="match status" value="1"/>
</dbReference>
<dbReference type="InterPro" id="IPR003369">
    <property type="entry name" value="TatA/B/E"/>
</dbReference>
<dbReference type="InterPro" id="IPR006312">
    <property type="entry name" value="TatA/E"/>
</dbReference>
<dbReference type="NCBIfam" id="NF002448">
    <property type="entry name" value="PRK01614.1"/>
    <property type="match status" value="1"/>
</dbReference>
<dbReference type="NCBIfam" id="TIGR01411">
    <property type="entry name" value="tatAE"/>
    <property type="match status" value="1"/>
</dbReference>
<dbReference type="PANTHER" id="PTHR42982">
    <property type="entry name" value="SEC-INDEPENDENT PROTEIN TRANSLOCASE PROTEIN TATA"/>
    <property type="match status" value="1"/>
</dbReference>
<dbReference type="PANTHER" id="PTHR42982:SF1">
    <property type="entry name" value="SEC-INDEPENDENT PROTEIN TRANSLOCASE PROTEIN TATA"/>
    <property type="match status" value="1"/>
</dbReference>
<dbReference type="Pfam" id="PF02416">
    <property type="entry name" value="TatA_B_E"/>
    <property type="match status" value="1"/>
</dbReference>
<gene>
    <name evidence="1" type="primary">tatA</name>
    <name type="ordered locus">plu4410</name>
</gene>
<keyword id="KW-0997">Cell inner membrane</keyword>
<keyword id="KW-1003">Cell membrane</keyword>
<keyword id="KW-0472">Membrane</keyword>
<keyword id="KW-0653">Protein transport</keyword>
<keyword id="KW-1185">Reference proteome</keyword>
<keyword id="KW-0811">Translocation</keyword>
<keyword id="KW-0812">Transmembrane</keyword>
<keyword id="KW-1133">Transmembrane helix</keyword>
<keyword id="KW-0813">Transport</keyword>
<name>TATA_PHOLL</name>
<reference key="1">
    <citation type="journal article" date="2003" name="Nat. Biotechnol.">
        <title>The genome sequence of the entomopathogenic bacterium Photorhabdus luminescens.</title>
        <authorList>
            <person name="Duchaud E."/>
            <person name="Rusniok C."/>
            <person name="Frangeul L."/>
            <person name="Buchrieser C."/>
            <person name="Givaudan A."/>
            <person name="Taourit S."/>
            <person name="Bocs S."/>
            <person name="Boursaux-Eude C."/>
            <person name="Chandler M."/>
            <person name="Charles J.-F."/>
            <person name="Dassa E."/>
            <person name="Derose R."/>
            <person name="Derzelle S."/>
            <person name="Freyssinet G."/>
            <person name="Gaudriault S."/>
            <person name="Medigue C."/>
            <person name="Lanois A."/>
            <person name="Powell K."/>
            <person name="Siguier P."/>
            <person name="Vincent R."/>
            <person name="Wingate V."/>
            <person name="Zouine M."/>
            <person name="Glaser P."/>
            <person name="Boemare N."/>
            <person name="Danchin A."/>
            <person name="Kunst F."/>
        </authorList>
    </citation>
    <scope>NUCLEOTIDE SEQUENCE [LARGE SCALE GENOMIC DNA]</scope>
    <source>
        <strain>DSM 15139 / CIP 105565 / TT01</strain>
    </source>
</reference>
<organism>
    <name type="scientific">Photorhabdus laumondii subsp. laumondii (strain DSM 15139 / CIP 105565 / TT01)</name>
    <name type="common">Photorhabdus luminescens subsp. laumondii</name>
    <dbReference type="NCBI Taxonomy" id="243265"/>
    <lineage>
        <taxon>Bacteria</taxon>
        <taxon>Pseudomonadati</taxon>
        <taxon>Pseudomonadota</taxon>
        <taxon>Gammaproteobacteria</taxon>
        <taxon>Enterobacterales</taxon>
        <taxon>Morganellaceae</taxon>
        <taxon>Photorhabdus</taxon>
    </lineage>
</organism>
<proteinExistence type="inferred from homology"/>
<sequence>MGGISIWQLLIIAVIVVLLFGTNKLRTLGSDLGASIKGFKKAIGDDNQPQQAQKTSSDADFETKNITEKQSVAQSETSESKNKEQV</sequence>
<comment type="function">
    <text evidence="1">Part of the twin-arginine translocation (Tat) system that transports large folded proteins containing a characteristic twin-arginine motif in their signal peptide across membranes. TatA could form the protein-conducting channel of the Tat system.</text>
</comment>
<comment type="subunit">
    <text evidence="1">The Tat system comprises two distinct complexes: a TatABC complex, containing multiple copies of TatA, TatB and TatC subunits, and a separate TatA complex, containing only TatA subunits. Substrates initially bind to the TatABC complex, which probably triggers association of the separate TatA complex to form the active translocon.</text>
</comment>
<comment type="subcellular location">
    <subcellularLocation>
        <location evidence="1">Cell inner membrane</location>
        <topology evidence="1">Single-pass membrane protein</topology>
    </subcellularLocation>
</comment>
<comment type="similarity">
    <text evidence="1">Belongs to the TatA/E family.</text>
</comment>
<feature type="chain" id="PRO_1000044416" description="Sec-independent protein translocase protein TatA">
    <location>
        <begin position="1"/>
        <end position="86"/>
    </location>
</feature>
<feature type="transmembrane region" description="Helical" evidence="1">
    <location>
        <begin position="1"/>
        <end position="21"/>
    </location>
</feature>
<feature type="region of interest" description="Disordered" evidence="2">
    <location>
        <begin position="42"/>
        <end position="86"/>
    </location>
</feature>
<feature type="compositionally biased region" description="Polar residues" evidence="2">
    <location>
        <begin position="47"/>
        <end position="58"/>
    </location>
</feature>
<feature type="compositionally biased region" description="Polar residues" evidence="2">
    <location>
        <begin position="68"/>
        <end position="77"/>
    </location>
</feature>
<protein>
    <recommendedName>
        <fullName evidence="1">Sec-independent protein translocase protein TatA</fullName>
    </recommendedName>
</protein>